<dbReference type="EMBL" id="AC008153">
    <property type="status" value="NOT_ANNOTATED_CDS"/>
    <property type="molecule type" value="Genomic_DNA"/>
</dbReference>
<dbReference type="EMBL" id="CP002686">
    <property type="protein sequence ID" value="AEE75040.1"/>
    <property type="molecule type" value="Genomic_DNA"/>
</dbReference>
<dbReference type="EMBL" id="AF462798">
    <property type="protein sequence ID" value="AAL58894.1"/>
    <property type="molecule type" value="mRNA"/>
</dbReference>
<dbReference type="EMBL" id="AY113021">
    <property type="protein sequence ID" value="AAM47329.1"/>
    <property type="molecule type" value="mRNA"/>
</dbReference>
<dbReference type="EMBL" id="AK227026">
    <property type="protein sequence ID" value="BAE99089.1"/>
    <property type="molecule type" value="mRNA"/>
</dbReference>
<dbReference type="FunCoup" id="Q8W115">
    <property type="interactions" value="1945"/>
</dbReference>
<dbReference type="IntAct" id="Q8W115">
    <property type="interactions" value="3"/>
</dbReference>
<dbReference type="STRING" id="3702.Q8W115"/>
<dbReference type="PaxDb" id="3702-AT3G11397.1"/>
<dbReference type="ProteomicsDB" id="226498"/>
<dbReference type="EnsemblPlants" id="AT3G11397.1">
    <property type="protein sequence ID" value="AT3G11397.1"/>
    <property type="gene ID" value="AT3G11397"/>
</dbReference>
<dbReference type="Gramene" id="AT3G11397.1">
    <property type="protein sequence ID" value="AT3G11397.1"/>
    <property type="gene ID" value="AT3G11397"/>
</dbReference>
<dbReference type="KEGG" id="ath:AT3G11397"/>
<dbReference type="Araport" id="AT3G11397"/>
<dbReference type="TAIR" id="AT3G11397">
    <property type="gene designation" value="PRA1.A3"/>
</dbReference>
<dbReference type="eggNOG" id="ENOG502QSIX">
    <property type="taxonomic scope" value="Eukaryota"/>
</dbReference>
<dbReference type="HOGENOM" id="CLU_078633_0_0_1"/>
<dbReference type="InParanoid" id="Q8W115"/>
<dbReference type="OMA" id="PITHVIR"/>
<dbReference type="OrthoDB" id="537033at2759"/>
<dbReference type="PhylomeDB" id="Q8W115"/>
<dbReference type="PRO" id="PR:Q8W115"/>
<dbReference type="Proteomes" id="UP000006548">
    <property type="component" value="Chromosome 3"/>
</dbReference>
<dbReference type="ExpressionAtlas" id="Q8W115">
    <property type="expression patterns" value="baseline and differential"/>
</dbReference>
<dbReference type="GO" id="GO:0005783">
    <property type="term" value="C:endoplasmic reticulum"/>
    <property type="evidence" value="ECO:0000314"/>
    <property type="project" value="TAIR"/>
</dbReference>
<dbReference type="GO" id="GO:0010008">
    <property type="term" value="C:endosome membrane"/>
    <property type="evidence" value="ECO:0007669"/>
    <property type="project" value="UniProtKB-SubCell"/>
</dbReference>
<dbReference type="GO" id="GO:0016192">
    <property type="term" value="P:vesicle-mediated transport"/>
    <property type="evidence" value="ECO:0000314"/>
    <property type="project" value="TAIR"/>
</dbReference>
<dbReference type="InterPro" id="IPR004895">
    <property type="entry name" value="Prenylated_rab_accept_PRA1"/>
</dbReference>
<dbReference type="PANTHER" id="PTHR12859:SF5">
    <property type="entry name" value="PRA1 FAMILY PROTEIN A3"/>
    <property type="match status" value="1"/>
</dbReference>
<dbReference type="PANTHER" id="PTHR12859">
    <property type="entry name" value="PRA1 PROTEIN"/>
    <property type="match status" value="1"/>
</dbReference>
<dbReference type="Pfam" id="PF03208">
    <property type="entry name" value="PRA1"/>
    <property type="match status" value="1"/>
</dbReference>
<gene>
    <name type="primary">PRA1A3</name>
    <name type="ordered locus">At3g11397</name>
    <name type="ORF">F24K9</name>
</gene>
<protein>
    <recommendedName>
        <fullName>PRA1 family protein A3</fullName>
        <shortName>AtPRA1.A3</shortName>
    </recommendedName>
</protein>
<accession>Q8W115</accession>
<sequence length="209" mass="24098">MDWDSVAAEDVIEALREVEWSASPRSLAEFFSRFAFPRSFSKWMSRLKCNLYYYRTNYFILFVFVLGLALITRPLAILGAALTALSLAFLNDSFAATFNEKMIRTIRHFSPHLAAKMRPPHMPVIRGRSATRKTVYICGQPRLVFVLLGLTASFVLWFTSCGLLWVLYALTTALLMILLHASLRTPNLKARLNTFREEFRAVWRNYSEL</sequence>
<organism>
    <name type="scientific">Arabidopsis thaliana</name>
    <name type="common">Mouse-ear cress</name>
    <dbReference type="NCBI Taxonomy" id="3702"/>
    <lineage>
        <taxon>Eukaryota</taxon>
        <taxon>Viridiplantae</taxon>
        <taxon>Streptophyta</taxon>
        <taxon>Embryophyta</taxon>
        <taxon>Tracheophyta</taxon>
        <taxon>Spermatophyta</taxon>
        <taxon>Magnoliopsida</taxon>
        <taxon>eudicotyledons</taxon>
        <taxon>Gunneridae</taxon>
        <taxon>Pentapetalae</taxon>
        <taxon>rosids</taxon>
        <taxon>malvids</taxon>
        <taxon>Brassicales</taxon>
        <taxon>Brassicaceae</taxon>
        <taxon>Camelineae</taxon>
        <taxon>Arabidopsis</taxon>
    </lineage>
</organism>
<keyword id="KW-0967">Endosome</keyword>
<keyword id="KW-0472">Membrane</keyword>
<keyword id="KW-1185">Reference proteome</keyword>
<keyword id="KW-0812">Transmembrane</keyword>
<keyword id="KW-1133">Transmembrane helix</keyword>
<keyword id="KW-0813">Transport</keyword>
<feature type="chain" id="PRO_0000352249" description="PRA1 family protein A3">
    <location>
        <begin position="1"/>
        <end position="209"/>
    </location>
</feature>
<feature type="transmembrane region" description="Helical" evidence="2">
    <location>
        <begin position="51"/>
        <end position="72"/>
    </location>
</feature>
<feature type="transmembrane region" description="Helical" evidence="2">
    <location>
        <begin position="76"/>
        <end position="98"/>
    </location>
</feature>
<feature type="transmembrane region" description="Helical" evidence="2">
    <location>
        <begin position="143"/>
        <end position="163"/>
    </location>
</feature>
<feature type="transmembrane region" description="Helical" evidence="2">
    <location>
        <begin position="164"/>
        <end position="184"/>
    </location>
</feature>
<name>PR1A3_ARATH</name>
<evidence type="ECO:0000250" key="1"/>
<evidence type="ECO:0000255" key="2"/>
<evidence type="ECO:0000269" key="3">
    <source>
    </source>
</evidence>
<evidence type="ECO:0000305" key="4"/>
<comment type="function">
    <text evidence="1">May be involved in both secretory and endocytic intracellular trafficking in the endosomal/prevacuolar compartments.</text>
</comment>
<comment type="subcellular location">
    <subcellularLocation>
        <location evidence="3">Endosome membrane</location>
        <topology evidence="3">Multi-pass membrane protein</topology>
    </subcellularLocation>
</comment>
<comment type="similarity">
    <text evidence="4">Belongs to the PRA1 family.</text>
</comment>
<reference key="1">
    <citation type="journal article" date="2000" name="Nature">
        <title>Sequence and analysis of chromosome 3 of the plant Arabidopsis thaliana.</title>
        <authorList>
            <person name="Salanoubat M."/>
            <person name="Lemcke K."/>
            <person name="Rieger M."/>
            <person name="Ansorge W."/>
            <person name="Unseld M."/>
            <person name="Fartmann B."/>
            <person name="Valle G."/>
            <person name="Bloecker H."/>
            <person name="Perez-Alonso M."/>
            <person name="Obermaier B."/>
            <person name="Delseny M."/>
            <person name="Boutry M."/>
            <person name="Grivell L.A."/>
            <person name="Mache R."/>
            <person name="Puigdomenech P."/>
            <person name="De Simone V."/>
            <person name="Choisne N."/>
            <person name="Artiguenave F."/>
            <person name="Robert C."/>
            <person name="Brottier P."/>
            <person name="Wincker P."/>
            <person name="Cattolico L."/>
            <person name="Weissenbach J."/>
            <person name="Saurin W."/>
            <person name="Quetier F."/>
            <person name="Schaefer M."/>
            <person name="Mueller-Auer S."/>
            <person name="Gabel C."/>
            <person name="Fuchs M."/>
            <person name="Benes V."/>
            <person name="Wurmbach E."/>
            <person name="Drzonek H."/>
            <person name="Erfle H."/>
            <person name="Jordan N."/>
            <person name="Bangert S."/>
            <person name="Wiedelmann R."/>
            <person name="Kranz H."/>
            <person name="Voss H."/>
            <person name="Holland R."/>
            <person name="Brandt P."/>
            <person name="Nyakatura G."/>
            <person name="Vezzi A."/>
            <person name="D'Angelo M."/>
            <person name="Pallavicini A."/>
            <person name="Toppo S."/>
            <person name="Simionati B."/>
            <person name="Conrad A."/>
            <person name="Hornischer K."/>
            <person name="Kauer G."/>
            <person name="Loehnert T.-H."/>
            <person name="Nordsiek G."/>
            <person name="Reichelt J."/>
            <person name="Scharfe M."/>
            <person name="Schoen O."/>
            <person name="Bargues M."/>
            <person name="Terol J."/>
            <person name="Climent J."/>
            <person name="Navarro P."/>
            <person name="Collado C."/>
            <person name="Perez-Perez A."/>
            <person name="Ottenwaelder B."/>
            <person name="Duchemin D."/>
            <person name="Cooke R."/>
            <person name="Laudie M."/>
            <person name="Berger-Llauro C."/>
            <person name="Purnelle B."/>
            <person name="Masuy D."/>
            <person name="de Haan M."/>
            <person name="Maarse A.C."/>
            <person name="Alcaraz J.-P."/>
            <person name="Cottet A."/>
            <person name="Casacuberta E."/>
            <person name="Monfort A."/>
            <person name="Argiriou A."/>
            <person name="Flores M."/>
            <person name="Liguori R."/>
            <person name="Vitale D."/>
            <person name="Mannhaupt G."/>
            <person name="Haase D."/>
            <person name="Schoof H."/>
            <person name="Rudd S."/>
            <person name="Zaccaria P."/>
            <person name="Mewes H.-W."/>
            <person name="Mayer K.F.X."/>
            <person name="Kaul S."/>
            <person name="Town C.D."/>
            <person name="Koo H.L."/>
            <person name="Tallon L.J."/>
            <person name="Jenkins J."/>
            <person name="Rooney T."/>
            <person name="Rizzo M."/>
            <person name="Walts A."/>
            <person name="Utterback T."/>
            <person name="Fujii C.Y."/>
            <person name="Shea T.P."/>
            <person name="Creasy T.H."/>
            <person name="Haas B."/>
            <person name="Maiti R."/>
            <person name="Wu D."/>
            <person name="Peterson J."/>
            <person name="Van Aken S."/>
            <person name="Pai G."/>
            <person name="Militscher J."/>
            <person name="Sellers P."/>
            <person name="Gill J.E."/>
            <person name="Feldblyum T.V."/>
            <person name="Preuss D."/>
            <person name="Lin X."/>
            <person name="Nierman W.C."/>
            <person name="Salzberg S.L."/>
            <person name="White O."/>
            <person name="Venter J.C."/>
            <person name="Fraser C.M."/>
            <person name="Kaneko T."/>
            <person name="Nakamura Y."/>
            <person name="Sato S."/>
            <person name="Kato T."/>
            <person name="Asamizu E."/>
            <person name="Sasamoto S."/>
            <person name="Kimura T."/>
            <person name="Idesawa K."/>
            <person name="Kawashima K."/>
            <person name="Kishida Y."/>
            <person name="Kiyokawa C."/>
            <person name="Kohara M."/>
            <person name="Matsumoto M."/>
            <person name="Matsuno A."/>
            <person name="Muraki A."/>
            <person name="Nakayama S."/>
            <person name="Nakazaki N."/>
            <person name="Shinpo S."/>
            <person name="Takeuchi C."/>
            <person name="Wada T."/>
            <person name="Watanabe A."/>
            <person name="Yamada M."/>
            <person name="Yasuda M."/>
            <person name="Tabata S."/>
        </authorList>
    </citation>
    <scope>NUCLEOTIDE SEQUENCE [LARGE SCALE GENOMIC DNA]</scope>
    <source>
        <strain>cv. Columbia</strain>
    </source>
</reference>
<reference key="2">
    <citation type="journal article" date="2017" name="Plant J.">
        <title>Araport11: a complete reannotation of the Arabidopsis thaliana reference genome.</title>
        <authorList>
            <person name="Cheng C.Y."/>
            <person name="Krishnakumar V."/>
            <person name="Chan A.P."/>
            <person name="Thibaud-Nissen F."/>
            <person name="Schobel S."/>
            <person name="Town C.D."/>
        </authorList>
    </citation>
    <scope>GENOME REANNOTATION</scope>
    <source>
        <strain>cv. Columbia</strain>
    </source>
</reference>
<reference key="3">
    <citation type="journal article" date="2003" name="Science">
        <title>Empirical analysis of transcriptional activity in the Arabidopsis genome.</title>
        <authorList>
            <person name="Yamada K."/>
            <person name="Lim J."/>
            <person name="Dale J.M."/>
            <person name="Chen H."/>
            <person name="Shinn P."/>
            <person name="Palm C.J."/>
            <person name="Southwick A.M."/>
            <person name="Wu H.C."/>
            <person name="Kim C.J."/>
            <person name="Nguyen M."/>
            <person name="Pham P.K."/>
            <person name="Cheuk R.F."/>
            <person name="Karlin-Newmann G."/>
            <person name="Liu S.X."/>
            <person name="Lam B."/>
            <person name="Sakano H."/>
            <person name="Wu T."/>
            <person name="Yu G."/>
            <person name="Miranda M."/>
            <person name="Quach H.L."/>
            <person name="Tripp M."/>
            <person name="Chang C.H."/>
            <person name="Lee J.M."/>
            <person name="Toriumi M.J."/>
            <person name="Chan M.M."/>
            <person name="Tang C.C."/>
            <person name="Onodera C.S."/>
            <person name="Deng J.M."/>
            <person name="Akiyama K."/>
            <person name="Ansari Y."/>
            <person name="Arakawa T."/>
            <person name="Banh J."/>
            <person name="Banno F."/>
            <person name="Bowser L."/>
            <person name="Brooks S.Y."/>
            <person name="Carninci P."/>
            <person name="Chao Q."/>
            <person name="Choy N."/>
            <person name="Enju A."/>
            <person name="Goldsmith A.D."/>
            <person name="Gurjal M."/>
            <person name="Hansen N.F."/>
            <person name="Hayashizaki Y."/>
            <person name="Johnson-Hopson C."/>
            <person name="Hsuan V.W."/>
            <person name="Iida K."/>
            <person name="Karnes M."/>
            <person name="Khan S."/>
            <person name="Koesema E."/>
            <person name="Ishida J."/>
            <person name="Jiang P.X."/>
            <person name="Jones T."/>
            <person name="Kawai J."/>
            <person name="Kamiya A."/>
            <person name="Meyers C."/>
            <person name="Nakajima M."/>
            <person name="Narusaka M."/>
            <person name="Seki M."/>
            <person name="Sakurai T."/>
            <person name="Satou M."/>
            <person name="Tamse R."/>
            <person name="Vaysberg M."/>
            <person name="Wallender E.K."/>
            <person name="Wong C."/>
            <person name="Yamamura Y."/>
            <person name="Yuan S."/>
            <person name="Shinozaki K."/>
            <person name="Davis R.W."/>
            <person name="Theologis A."/>
            <person name="Ecker J.R."/>
        </authorList>
    </citation>
    <scope>NUCLEOTIDE SEQUENCE [LARGE SCALE MRNA]</scope>
    <source>
        <strain>cv. Columbia</strain>
    </source>
</reference>
<reference key="4">
    <citation type="submission" date="2006-07" db="EMBL/GenBank/DDBJ databases">
        <title>Large-scale analysis of RIKEN Arabidopsis full-length (RAFL) cDNAs.</title>
        <authorList>
            <person name="Totoki Y."/>
            <person name="Seki M."/>
            <person name="Ishida J."/>
            <person name="Nakajima M."/>
            <person name="Enju A."/>
            <person name="Kamiya A."/>
            <person name="Narusaka M."/>
            <person name="Shin-i T."/>
            <person name="Nakagawa M."/>
            <person name="Sakamoto N."/>
            <person name="Oishi K."/>
            <person name="Kohara Y."/>
            <person name="Kobayashi M."/>
            <person name="Toyoda A."/>
            <person name="Sakaki Y."/>
            <person name="Sakurai T."/>
            <person name="Iida K."/>
            <person name="Akiyama K."/>
            <person name="Satou M."/>
            <person name="Toyoda T."/>
            <person name="Konagaya A."/>
            <person name="Carninci P."/>
            <person name="Kawai J."/>
            <person name="Hayashizaki Y."/>
            <person name="Shinozaki K."/>
        </authorList>
    </citation>
    <scope>NUCLEOTIDE SEQUENCE [LARGE SCALE MRNA]</scope>
    <source>
        <strain>cv. Columbia</strain>
    </source>
</reference>
<reference key="5">
    <citation type="journal article" date="2008" name="Plant Physiol.">
        <title>The PRA1 gene family in Arabidopsis.</title>
        <authorList>
            <person name="Alvim Kamei C.L."/>
            <person name="Boruc J."/>
            <person name="Vandepoele K."/>
            <person name="Van den Daele H."/>
            <person name="Maes S."/>
            <person name="Russinova E."/>
            <person name="Inze D."/>
            <person name="de Veylder L."/>
        </authorList>
    </citation>
    <scope>SUBCELLULAR LOCATION</scope>
    <scope>GENE FAMILY</scope>
    <scope>NOMENCLATURE</scope>
</reference>
<proteinExistence type="evidence at transcript level"/>